<comment type="function">
    <text evidence="2">Component of the ubiquinol-cytochrome c reductase complex (complex III or cytochrome b-c1 complex) that is part of the mitochondrial respiratory chain. The b-c1 complex mediates electron transfer from ubiquinol to cytochrome c. Contributes to the generation of a proton gradient across the mitochondrial membrane that is then used for ATP synthesis.</text>
</comment>
<comment type="cofactor">
    <cofactor evidence="2">
        <name>heme b</name>
        <dbReference type="ChEBI" id="CHEBI:60344"/>
    </cofactor>
    <text evidence="2">Binds 2 heme b groups non-covalently.</text>
</comment>
<comment type="subunit">
    <text evidence="2">The cytochrome bc1 complex contains 11 subunits: 3 respiratory subunits (MT-CYB, CYC1 and UQCRFS1), 2 core proteins (UQCRC1 and UQCRC2) and 6 low-molecular weight proteins (UQCRH/QCR6, UQCRB/QCR7, UQCRQ/QCR8, UQCR10/QCR9, UQCR11/QCR10 and a cleavage product of UQCRFS1). This cytochrome bc1 complex then forms a dimer.</text>
</comment>
<comment type="subcellular location">
    <subcellularLocation>
        <location evidence="2">Mitochondrion inner membrane</location>
        <topology evidence="2">Multi-pass membrane protein</topology>
    </subcellularLocation>
</comment>
<comment type="miscellaneous">
    <text evidence="1">Heme 1 (or BL or b562) is low-potential and absorbs at about 562 nm, and heme 2 (or BH or b566) is high-potential and absorbs at about 566 nm.</text>
</comment>
<comment type="similarity">
    <text evidence="3 4">Belongs to the cytochrome b family.</text>
</comment>
<comment type="caution">
    <text evidence="2">The full-length protein contains only eight transmembrane helices, not nine as predicted by bioinformatics tools.</text>
</comment>
<feature type="chain" id="PRO_0000061203" description="Cytochrome b">
    <location>
        <begin position="1"/>
        <end position="379"/>
    </location>
</feature>
<feature type="transmembrane region" description="Helical" evidence="2">
    <location>
        <begin position="33"/>
        <end position="53"/>
    </location>
</feature>
<feature type="transmembrane region" description="Helical" evidence="2">
    <location>
        <begin position="77"/>
        <end position="98"/>
    </location>
</feature>
<feature type="transmembrane region" description="Helical" evidence="2">
    <location>
        <begin position="113"/>
        <end position="133"/>
    </location>
</feature>
<feature type="transmembrane region" description="Helical" evidence="2">
    <location>
        <begin position="178"/>
        <end position="198"/>
    </location>
</feature>
<feature type="transmembrane region" description="Helical" evidence="2">
    <location>
        <begin position="226"/>
        <end position="246"/>
    </location>
</feature>
<feature type="transmembrane region" description="Helical" evidence="2">
    <location>
        <begin position="288"/>
        <end position="308"/>
    </location>
</feature>
<feature type="transmembrane region" description="Helical" evidence="2">
    <location>
        <begin position="320"/>
        <end position="340"/>
    </location>
</feature>
<feature type="transmembrane region" description="Helical" evidence="2">
    <location>
        <begin position="347"/>
        <end position="367"/>
    </location>
</feature>
<feature type="binding site" description="axial binding residue" evidence="2">
    <location>
        <position position="83"/>
    </location>
    <ligand>
        <name>heme b</name>
        <dbReference type="ChEBI" id="CHEBI:60344"/>
        <label>b562</label>
    </ligand>
    <ligandPart>
        <name>Fe</name>
        <dbReference type="ChEBI" id="CHEBI:18248"/>
    </ligandPart>
</feature>
<feature type="binding site" description="axial binding residue" evidence="2">
    <location>
        <position position="97"/>
    </location>
    <ligand>
        <name>heme b</name>
        <dbReference type="ChEBI" id="CHEBI:60344"/>
        <label>b566</label>
    </ligand>
    <ligandPart>
        <name>Fe</name>
        <dbReference type="ChEBI" id="CHEBI:18248"/>
    </ligandPart>
</feature>
<feature type="binding site" description="axial binding residue" evidence="2">
    <location>
        <position position="182"/>
    </location>
    <ligand>
        <name>heme b</name>
        <dbReference type="ChEBI" id="CHEBI:60344"/>
        <label>b562</label>
    </ligand>
    <ligandPart>
        <name>Fe</name>
        <dbReference type="ChEBI" id="CHEBI:18248"/>
    </ligandPart>
</feature>
<feature type="binding site" description="axial binding residue" evidence="2">
    <location>
        <position position="196"/>
    </location>
    <ligand>
        <name>heme b</name>
        <dbReference type="ChEBI" id="CHEBI:60344"/>
        <label>b566</label>
    </ligand>
    <ligandPart>
        <name>Fe</name>
        <dbReference type="ChEBI" id="CHEBI:18248"/>
    </ligandPart>
</feature>
<feature type="binding site" evidence="2">
    <location>
        <position position="201"/>
    </location>
    <ligand>
        <name>a ubiquinone</name>
        <dbReference type="ChEBI" id="CHEBI:16389"/>
    </ligand>
</feature>
<geneLocation type="mitochondrion"/>
<reference key="1">
    <citation type="journal article" date="2001" name="J. Mammal.">
        <title>Systematics of bats of the genus Glossophaga (Chiroptera: Phyllostomidae) and phylogeography in G. soricina based on the cytochrome b gene.</title>
        <authorList>
            <person name="Hoffmann F.G."/>
            <person name="Baker R.J."/>
        </authorList>
    </citation>
    <scope>NUCLEOTIDE SEQUENCE [GENOMIC DNA]</scope>
</reference>
<keyword id="KW-0249">Electron transport</keyword>
<keyword id="KW-0349">Heme</keyword>
<keyword id="KW-0408">Iron</keyword>
<keyword id="KW-0472">Membrane</keyword>
<keyword id="KW-0479">Metal-binding</keyword>
<keyword id="KW-0496">Mitochondrion</keyword>
<keyword id="KW-0999">Mitochondrion inner membrane</keyword>
<keyword id="KW-0679">Respiratory chain</keyword>
<keyword id="KW-0812">Transmembrane</keyword>
<keyword id="KW-1133">Transmembrane helix</keyword>
<keyword id="KW-0813">Transport</keyword>
<keyword id="KW-0830">Ubiquinone</keyword>
<accession>Q8WGF8</accession>
<sequence length="379" mass="42679">MTNIRKTHPLLKIINSSFVDLPAPSSLSSWWNFGSLLGVCLAVQILTGLFLAMHYTSDTATAFNSVTHICRDVNYGWTLRYLHANGASMFFICLYLHVGRGLYYGSYTYSETWNIGILLLFAVMATAFMGYVLPWGQMSFWGATVITNLLSAIPYIGTDLVQWIWGGFSVDKATLTRFFAFHFLLPFIVAALVMVHLLFLHETGSNNPTGIPSDPDMIPFHPYYTIKDILGFLIMLTALSALVLFSPDLLGDPDNYIPANPLNTPPHIKPEWYFLFAYAILRSIPNKLGGVLALVLSILILAVVPILHTSKQRSMMFRPLSQFLFWLLVAVLFTLTWIGGQPVEYPYVIIGQVASILYFMILLILMPLVSIMENRLLKW</sequence>
<protein>
    <recommendedName>
        <fullName>Cytochrome b</fullName>
    </recommendedName>
    <alternativeName>
        <fullName>Complex III subunit 3</fullName>
    </alternativeName>
    <alternativeName>
        <fullName>Complex III subunit III</fullName>
    </alternativeName>
    <alternativeName>
        <fullName>Cytochrome b-c1 complex subunit 3</fullName>
    </alternativeName>
    <alternativeName>
        <fullName>Ubiquinol-cytochrome-c reductase complex cytochrome b subunit</fullName>
    </alternativeName>
</protein>
<evidence type="ECO:0000250" key="1"/>
<evidence type="ECO:0000250" key="2">
    <source>
        <dbReference type="UniProtKB" id="P00157"/>
    </source>
</evidence>
<evidence type="ECO:0000255" key="3">
    <source>
        <dbReference type="PROSITE-ProRule" id="PRU00967"/>
    </source>
</evidence>
<evidence type="ECO:0000255" key="4">
    <source>
        <dbReference type="PROSITE-ProRule" id="PRU00968"/>
    </source>
</evidence>
<proteinExistence type="inferred from homology"/>
<name>CYB_MONPL</name>
<dbReference type="EMBL" id="AF382887">
    <property type="protein sequence ID" value="AAL32361.1"/>
    <property type="molecule type" value="Genomic_DNA"/>
</dbReference>
<dbReference type="SMR" id="Q8WGF8"/>
<dbReference type="GO" id="GO:0005743">
    <property type="term" value="C:mitochondrial inner membrane"/>
    <property type="evidence" value="ECO:0007669"/>
    <property type="project" value="UniProtKB-SubCell"/>
</dbReference>
<dbReference type="GO" id="GO:0045275">
    <property type="term" value="C:respiratory chain complex III"/>
    <property type="evidence" value="ECO:0007669"/>
    <property type="project" value="InterPro"/>
</dbReference>
<dbReference type="GO" id="GO:0046872">
    <property type="term" value="F:metal ion binding"/>
    <property type="evidence" value="ECO:0007669"/>
    <property type="project" value="UniProtKB-KW"/>
</dbReference>
<dbReference type="GO" id="GO:0008121">
    <property type="term" value="F:ubiquinol-cytochrome-c reductase activity"/>
    <property type="evidence" value="ECO:0007669"/>
    <property type="project" value="InterPro"/>
</dbReference>
<dbReference type="GO" id="GO:0006122">
    <property type="term" value="P:mitochondrial electron transport, ubiquinol to cytochrome c"/>
    <property type="evidence" value="ECO:0007669"/>
    <property type="project" value="TreeGrafter"/>
</dbReference>
<dbReference type="CDD" id="cd00290">
    <property type="entry name" value="cytochrome_b_C"/>
    <property type="match status" value="1"/>
</dbReference>
<dbReference type="CDD" id="cd00284">
    <property type="entry name" value="Cytochrome_b_N"/>
    <property type="match status" value="1"/>
</dbReference>
<dbReference type="FunFam" id="1.20.810.10:FF:000002">
    <property type="entry name" value="Cytochrome b"/>
    <property type="match status" value="1"/>
</dbReference>
<dbReference type="Gene3D" id="1.20.810.10">
    <property type="entry name" value="Cytochrome Bc1 Complex, Chain C"/>
    <property type="match status" value="1"/>
</dbReference>
<dbReference type="InterPro" id="IPR005798">
    <property type="entry name" value="Cyt_b/b6_C"/>
</dbReference>
<dbReference type="InterPro" id="IPR036150">
    <property type="entry name" value="Cyt_b/b6_C_sf"/>
</dbReference>
<dbReference type="InterPro" id="IPR005797">
    <property type="entry name" value="Cyt_b/b6_N"/>
</dbReference>
<dbReference type="InterPro" id="IPR027387">
    <property type="entry name" value="Cytb/b6-like_sf"/>
</dbReference>
<dbReference type="InterPro" id="IPR030689">
    <property type="entry name" value="Cytochrome_b"/>
</dbReference>
<dbReference type="InterPro" id="IPR048260">
    <property type="entry name" value="Cytochrome_b_C_euk/bac"/>
</dbReference>
<dbReference type="InterPro" id="IPR048259">
    <property type="entry name" value="Cytochrome_b_N_euk/bac"/>
</dbReference>
<dbReference type="InterPro" id="IPR016174">
    <property type="entry name" value="Di-haem_cyt_TM"/>
</dbReference>
<dbReference type="PANTHER" id="PTHR19271">
    <property type="entry name" value="CYTOCHROME B"/>
    <property type="match status" value="1"/>
</dbReference>
<dbReference type="PANTHER" id="PTHR19271:SF16">
    <property type="entry name" value="CYTOCHROME B"/>
    <property type="match status" value="1"/>
</dbReference>
<dbReference type="Pfam" id="PF00032">
    <property type="entry name" value="Cytochrom_B_C"/>
    <property type="match status" value="1"/>
</dbReference>
<dbReference type="Pfam" id="PF00033">
    <property type="entry name" value="Cytochrome_B"/>
    <property type="match status" value="1"/>
</dbReference>
<dbReference type="PIRSF" id="PIRSF038885">
    <property type="entry name" value="COB"/>
    <property type="match status" value="1"/>
</dbReference>
<dbReference type="SUPFAM" id="SSF81648">
    <property type="entry name" value="a domain/subunit of cytochrome bc1 complex (Ubiquinol-cytochrome c reductase)"/>
    <property type="match status" value="1"/>
</dbReference>
<dbReference type="SUPFAM" id="SSF81342">
    <property type="entry name" value="Transmembrane di-heme cytochromes"/>
    <property type="match status" value="1"/>
</dbReference>
<dbReference type="PROSITE" id="PS51003">
    <property type="entry name" value="CYTB_CTER"/>
    <property type="match status" value="1"/>
</dbReference>
<dbReference type="PROSITE" id="PS51002">
    <property type="entry name" value="CYTB_NTER"/>
    <property type="match status" value="1"/>
</dbReference>
<gene>
    <name type="primary">MT-CYB</name>
    <name type="synonym">COB</name>
    <name type="synonym">CYTB</name>
    <name type="synonym">MTCYB</name>
</gene>
<organism>
    <name type="scientific">Monophyllus plethodon</name>
    <name type="common">Insular single leaf bat</name>
    <dbReference type="NCBI Taxonomy" id="177163"/>
    <lineage>
        <taxon>Eukaryota</taxon>
        <taxon>Metazoa</taxon>
        <taxon>Chordata</taxon>
        <taxon>Craniata</taxon>
        <taxon>Vertebrata</taxon>
        <taxon>Euteleostomi</taxon>
        <taxon>Mammalia</taxon>
        <taxon>Eutheria</taxon>
        <taxon>Laurasiatheria</taxon>
        <taxon>Chiroptera</taxon>
        <taxon>Yangochiroptera</taxon>
        <taxon>Phyllostomidae</taxon>
        <taxon>Glossophaginae</taxon>
        <taxon>Monophyllus</taxon>
    </lineage>
</organism>